<sequence length="386" mass="45419">MDIVLEICDYYLFDKVYADVFPKDGAVHEFLKPAIQSFSQIDFPSLPNLDSFDTNSTLISSNNFNISNVNPATIPSYLFSKIASYQDKSEIYGLAPKFFPATDFINTSFLARSNIFRETLSLFIITTIFGWLLYFIVAYLSYVFVFDKKIFNHPRYLKNQMSLEIKRATTAIPVMVLLTIPFFLLELNGYSFLYLDINECTGGYKAILWQIPKFILFTDCGIYFLHRWLHWPSVYKVLHKPHHKWIVCTPFASHAFHPVDGFFQSLPYHLYPLLFPLHKVLYLFLFTFVNFWTVMIHDGSYWSNDPVVNGTACHTVHHLYFNYNYGQFTTLWDRLGNSYRRPDDSLFVKDAKAEEEKKIWKEQTRKMEEIRGEVEGKVDDREYVEQ</sequence>
<comment type="function">
    <text evidence="3 4 6 8">C-5 sterol desaturase; part of the third module of ergosterol biosynthesis pathway that includes the late steps of the pathwa (PubMed:10433965, PubMed:20733039, PubMed:9000517). ERG3 catalyzes the introduction of a C-5 double bond in the B ring to produce 5-dehydroepisterol (PubMed:10433965). The third module or late pathway involves the ergosterol synthesis itself through consecutive reactions that mainly occur in the endoplasmic reticulum (ER) membrane. Firstly, the squalene synthase ERG9 catalyzes the condensation of 2 farnesyl pyrophosphate moieties to form squalene, which is the precursor of all steroids. Squalene synthase is crucial for balancing the incorporation of farnesyl diphosphate (FPP) into sterol and nonsterol isoprene synthesis. Secondly, the squalene epoxidase ERG1 catalyzes the stereospecific oxidation of squalene to (S)-2,3-epoxysqualene, which is considered to be a rate-limiting enzyme in steroid biosynthesis. Then, the lanosterol synthase ERG7 catalyzes the cyclization of (S)-2,3 oxidosqualene to lanosterol, a reaction that forms the sterol core. In the next steps, lanosterol is transformed to zymosterol through a complex process involving various demethylation, reduction and desaturation reactions. The lanosterol 14-alpha-demethylase ERG11 (also known as CYP51) catalyzes C14-demethylation of lanosterol to produce 4,4'-dimethyl cholesta-8,14,24-triene-3-beta-ol, which is critical for ergosterol biosynthesis. The C-14 reductase ERG24 reduces the C14=C15 double bond of 4,4-dimethyl-cholesta-8,14,24-trienol to produce 4,4-dimethyl-cholesta-8,24-dienol. 4,4-dimethyl-cholesta-8,24-dienol is substrate of the C-4 demethylation complex ERG25-ERG26-ERG27 in which ERG25 catalyzes the three-step monooxygenation required for the demethylation of 4,4-dimethyl and 4alpha-methylsterols, ERG26 catalyzes the oxidative decarboxylation that results in a reduction of the 3-beta-hydroxy group at the C-3 carbon to an oxo group, and ERG27 is responsible for the reduction of the keto group on the C-3. ERG28 has a role as a scaffold to help anchor ERG25, ERG26 and ERG27 to the endoplasmic reticulum and ERG29 regulates the activity of the iron-containing C4-methylsterol oxidase ERG25. Then, the sterol 24-C-methyltransferase ERG6 catalyzes the methyl transfer from S-adenosyl-methionine to the C-24 of zymosterol to form fecosterol. The C-8 sterol isomerase ERG2 catalyzes the reaction which results in unsaturation at C-7 in the B ring of sterols and thus converts fecosterol to episterol. The sterol-C5-desaturase ERG3 then catalyzes the introduction of a C-5 double bond in the B ring to produce 5-dehydroepisterol. The C-22 sterol desaturase ERG5 further converts 5-dehydroepisterol into ergosta-5,7,22,24(28)-tetraen-3beta-ol by forming the C-22(23) double bond in the sterol side chain. Finally, ergosta-5,7,22,24(28)-tetraen-3beta-ol is substrate of the C-24(28) sterol reductase ERG4 to produce ergosterol (Probable).</text>
</comment>
<comment type="catalytic activity">
    <reaction evidence="9">
        <text>a Delta(7)-sterol + 2 Fe(II)-[cytochrome b5] + O2 + 2 H(+) = a Delta(5),Delta(7)-sterol + 2 Fe(III)-[cytochrome b5] + 2 H2O</text>
        <dbReference type="Rhea" id="RHEA:54320"/>
        <dbReference type="Rhea" id="RHEA-COMP:10438"/>
        <dbReference type="Rhea" id="RHEA-COMP:10439"/>
        <dbReference type="ChEBI" id="CHEBI:15377"/>
        <dbReference type="ChEBI" id="CHEBI:15378"/>
        <dbReference type="ChEBI" id="CHEBI:15379"/>
        <dbReference type="ChEBI" id="CHEBI:29033"/>
        <dbReference type="ChEBI" id="CHEBI:29034"/>
        <dbReference type="ChEBI" id="CHEBI:138130"/>
        <dbReference type="ChEBI" id="CHEBI:138131"/>
        <dbReference type="EC" id="1.14.19.20"/>
    </reaction>
    <physiologicalReaction direction="left-to-right" evidence="9">
        <dbReference type="Rhea" id="RHEA:54321"/>
    </physiologicalReaction>
</comment>
<comment type="cofactor">
    <cofactor evidence="1">
        <name>Fe cation</name>
        <dbReference type="ChEBI" id="CHEBI:24875"/>
    </cofactor>
</comment>
<comment type="pathway">
    <text evidence="9">Steroid metabolism; ergosterol biosynthesis; ergosterol from zymosterol: step 3/5.</text>
</comment>
<comment type="subcellular location">
    <subcellularLocation>
        <location evidence="8">Endoplasmic reticulum membrane</location>
        <topology evidence="2">Multi-pass membrane protein</topology>
    </subcellularLocation>
</comment>
<comment type="induction">
    <text evidence="5">Expression is repressed during spider biofilm formation (PubMed:22265407).</text>
</comment>
<comment type="domain">
    <text evidence="1">The histidine box domains may contain the active site and/or be involved in metal ion binding.</text>
</comment>
<comment type="miscellaneous">
    <text evidence="4 6">Defects in C-5 sterol desaturation results in antibiotic and azole resistance of Candida albicans during infection, particularly in AIDS patients.</text>
</comment>
<comment type="similarity">
    <text evidence="8">Belongs to the sterol desaturase family.</text>
</comment>
<organism>
    <name type="scientific">Candida albicans (strain SC5314 / ATCC MYA-2876)</name>
    <name type="common">Yeast</name>
    <dbReference type="NCBI Taxonomy" id="237561"/>
    <lineage>
        <taxon>Eukaryota</taxon>
        <taxon>Fungi</taxon>
        <taxon>Dikarya</taxon>
        <taxon>Ascomycota</taxon>
        <taxon>Saccharomycotina</taxon>
        <taxon>Pichiomycetes</taxon>
        <taxon>Debaryomycetaceae</taxon>
        <taxon>Candida/Lodderomyces clade</taxon>
        <taxon>Candida</taxon>
    </lineage>
</organism>
<gene>
    <name evidence="7" type="primary">ERG3</name>
    <name type="ordered locus">orf19.767</name>
    <name type="ORF">CAALFM_C104770CA</name>
</gene>
<proteinExistence type="evidence at transcript level"/>
<feature type="chain" id="PRO_0000454172" description="Delta(7)-sterol 5(6)-desaturase ERG3">
    <location>
        <begin position="1"/>
        <end position="386"/>
    </location>
</feature>
<feature type="transmembrane region" description="Helical" evidence="2">
    <location>
        <begin position="120"/>
        <end position="140"/>
    </location>
</feature>
<feature type="transmembrane region" description="Helical" evidence="2">
    <location>
        <begin position="172"/>
        <end position="192"/>
    </location>
</feature>
<feature type="transmembrane region" description="Helical" evidence="2">
    <location>
        <begin position="206"/>
        <end position="226"/>
    </location>
</feature>
<feature type="transmembrane region" description="Helical" evidence="2">
    <location>
        <begin position="272"/>
        <end position="292"/>
    </location>
</feature>
<feature type="domain" description="Fatty acid hydroxylase" evidence="2">
    <location>
        <begin position="214"/>
        <end position="337"/>
    </location>
</feature>
<feature type="short sequence motif" description="Histidine box-1" evidence="1">
    <location>
        <begin position="226"/>
        <end position="230"/>
    </location>
</feature>
<feature type="short sequence motif" description="Histidine box-2" evidence="1">
    <location>
        <begin position="239"/>
        <end position="243"/>
    </location>
</feature>
<feature type="short sequence motif" description="Histidine box-3" evidence="1">
    <location>
        <begin position="314"/>
        <end position="318"/>
    </location>
</feature>
<feature type="sequence variant" description="In strain: azole-resistant isolates." evidence="4">
    <original>K</original>
    <variation>E</variation>
    <location>
        <position position="97"/>
    </location>
</feature>
<feature type="sequence variant" description="In strain: azole-resistant isolates." evidence="4">
    <original>D</original>
    <variation>G</variation>
    <location>
        <position position="147"/>
    </location>
</feature>
<feature type="sequence variant" description="In strain: azole-resistant isolates." evidence="4">
    <original>L</original>
    <variation>P</variation>
    <location>
        <position position="193"/>
    </location>
</feature>
<feature type="sequence variant" description="In strain: azole-resistant isolates." evidence="4">
    <original>V</original>
    <variation>A</variation>
    <location>
        <position position="237"/>
    </location>
</feature>
<feature type="sequence variant" description="In strain: azole-resistant isolates." evidence="4">
    <original>H</original>
    <variation>N</variation>
    <location>
        <position position="243"/>
    </location>
</feature>
<feature type="sequence variant" description="In strain: azole-resistant isolates." evidence="4">
    <original>T</original>
    <variation>A</variation>
    <location>
        <position position="330"/>
    </location>
</feature>
<feature type="sequence variant" description="In strain: azole-resistant isolates." evidence="4">
    <original>A</original>
    <variation>V</variation>
    <location>
        <position position="351"/>
    </location>
</feature>
<feature type="sequence variant" description="In strain: azole-resistant isolates." evidence="4">
    <original>A</original>
    <variation>T</variation>
    <location>
        <position position="353"/>
    </location>
</feature>
<dbReference type="EC" id="1.14.19.20" evidence="9"/>
<dbReference type="EMBL" id="CP017623">
    <property type="protein sequence ID" value="AOW26151.1"/>
    <property type="molecule type" value="Genomic_DNA"/>
</dbReference>
<dbReference type="RefSeq" id="XP_713577.1">
    <property type="nucleotide sequence ID" value="XM_708484.2"/>
</dbReference>
<dbReference type="FunCoup" id="Q59VG6">
    <property type="interactions" value="200"/>
</dbReference>
<dbReference type="STRING" id="237561.Q59VG6"/>
<dbReference type="EnsemblFungi" id="C1_04770C_A-T">
    <property type="protein sequence ID" value="C1_04770C_A-T-p1"/>
    <property type="gene ID" value="C1_04770C_A"/>
</dbReference>
<dbReference type="GeneID" id="3644776"/>
<dbReference type="KEGG" id="cal:CAALFM_C104770CA"/>
<dbReference type="CGD" id="CAL0000190948">
    <property type="gene designation" value="ERG3"/>
</dbReference>
<dbReference type="VEuPathDB" id="FungiDB:C1_04770C_A"/>
<dbReference type="eggNOG" id="KOG0872">
    <property type="taxonomic scope" value="Eukaryota"/>
</dbReference>
<dbReference type="HOGENOM" id="CLU_047036_3_0_1"/>
<dbReference type="InParanoid" id="Q59VG6"/>
<dbReference type="OMA" id="GPGLWYN"/>
<dbReference type="OrthoDB" id="6354873at2759"/>
<dbReference type="BRENDA" id="1.14.19.20">
    <property type="organism ID" value="1096"/>
</dbReference>
<dbReference type="UniPathway" id="UPA00768">
    <property type="reaction ID" value="UER00762"/>
</dbReference>
<dbReference type="PHI-base" id="PHI:11044"/>
<dbReference type="PHI-base" id="PHI:8029"/>
<dbReference type="PHI-base" id="PHI:8122"/>
<dbReference type="Proteomes" id="UP000000559">
    <property type="component" value="Chromosome 1"/>
</dbReference>
<dbReference type="GO" id="GO:0005788">
    <property type="term" value="C:endoplasmic reticulum lumen"/>
    <property type="evidence" value="ECO:0007669"/>
    <property type="project" value="EnsemblFungi"/>
</dbReference>
<dbReference type="GO" id="GO:0005789">
    <property type="term" value="C:endoplasmic reticulum membrane"/>
    <property type="evidence" value="ECO:0007669"/>
    <property type="project" value="UniProtKB-SubCell"/>
</dbReference>
<dbReference type="GO" id="GO:0016020">
    <property type="term" value="C:membrane"/>
    <property type="evidence" value="ECO:0000318"/>
    <property type="project" value="GO_Central"/>
</dbReference>
<dbReference type="GO" id="GO:0005886">
    <property type="term" value="C:plasma membrane"/>
    <property type="evidence" value="ECO:0000314"/>
    <property type="project" value="CGD"/>
</dbReference>
<dbReference type="GO" id="GO:0000248">
    <property type="term" value="F:C-5 sterol desaturase activity"/>
    <property type="evidence" value="ECO:0000315"/>
    <property type="project" value="CGD"/>
</dbReference>
<dbReference type="GO" id="GO:0005506">
    <property type="term" value="F:iron ion binding"/>
    <property type="evidence" value="ECO:0007669"/>
    <property type="project" value="InterPro"/>
</dbReference>
<dbReference type="GO" id="GO:0006696">
    <property type="term" value="P:ergosterol biosynthetic process"/>
    <property type="evidence" value="ECO:0000315"/>
    <property type="project" value="CGD"/>
</dbReference>
<dbReference type="GO" id="GO:0030447">
    <property type="term" value="P:filamentous growth"/>
    <property type="evidence" value="ECO:0000315"/>
    <property type="project" value="CGD"/>
</dbReference>
<dbReference type="GO" id="GO:0044182">
    <property type="term" value="P:filamentous growth of a population of unicellular organisms"/>
    <property type="evidence" value="ECO:0000315"/>
    <property type="project" value="CGD"/>
</dbReference>
<dbReference type="GO" id="GO:0036180">
    <property type="term" value="P:filamentous growth of a population of unicellular organisms in response to biotic stimulus"/>
    <property type="evidence" value="ECO:0000315"/>
    <property type="project" value="CGD"/>
</dbReference>
<dbReference type="GO" id="GO:0016126">
    <property type="term" value="P:sterol biosynthetic process"/>
    <property type="evidence" value="ECO:0000318"/>
    <property type="project" value="GO_Central"/>
</dbReference>
<dbReference type="InterPro" id="IPR006694">
    <property type="entry name" value="Fatty_acid_hydroxylase"/>
</dbReference>
<dbReference type="InterPro" id="IPR050307">
    <property type="entry name" value="Sterol_Desaturase_Related"/>
</dbReference>
<dbReference type="PANTHER" id="PTHR11863">
    <property type="entry name" value="STEROL DESATURASE"/>
    <property type="match status" value="1"/>
</dbReference>
<dbReference type="Pfam" id="PF04116">
    <property type="entry name" value="FA_hydroxylase"/>
    <property type="match status" value="1"/>
</dbReference>
<evidence type="ECO:0000250" key="1">
    <source>
        <dbReference type="UniProtKB" id="P53045"/>
    </source>
</evidence>
<evidence type="ECO:0000255" key="2"/>
<evidence type="ECO:0000269" key="3">
    <source>
    </source>
</evidence>
<evidence type="ECO:0000269" key="4">
    <source>
    </source>
</evidence>
<evidence type="ECO:0000269" key="5">
    <source>
    </source>
</evidence>
<evidence type="ECO:0000269" key="6">
    <source>
    </source>
</evidence>
<evidence type="ECO:0000303" key="7">
    <source>
    </source>
</evidence>
<evidence type="ECO:0000305" key="8"/>
<evidence type="ECO:0000305" key="9">
    <source>
    </source>
</evidence>
<accession>Q59VG6</accession>
<reference key="1">
    <citation type="journal article" date="2004" name="Proc. Natl. Acad. Sci. U.S.A.">
        <title>The diploid genome sequence of Candida albicans.</title>
        <authorList>
            <person name="Jones T."/>
            <person name="Federspiel N.A."/>
            <person name="Chibana H."/>
            <person name="Dungan J."/>
            <person name="Kalman S."/>
            <person name="Magee B.B."/>
            <person name="Newport G."/>
            <person name="Thorstenson Y.R."/>
            <person name="Agabian N."/>
            <person name="Magee P.T."/>
            <person name="Davis R.W."/>
            <person name="Scherer S."/>
        </authorList>
    </citation>
    <scope>NUCLEOTIDE SEQUENCE [LARGE SCALE GENOMIC DNA]</scope>
    <source>
        <strain>SC5314 / ATCC MYA-2876</strain>
    </source>
</reference>
<reference key="2">
    <citation type="journal article" date="2007" name="Genome Biol.">
        <title>Assembly of the Candida albicans genome into sixteen supercontigs aligned on the eight chromosomes.</title>
        <authorList>
            <person name="van het Hoog M."/>
            <person name="Rast T.J."/>
            <person name="Martchenko M."/>
            <person name="Grindle S."/>
            <person name="Dignard D."/>
            <person name="Hogues H."/>
            <person name="Cuomo C."/>
            <person name="Berriman M."/>
            <person name="Scherer S."/>
            <person name="Magee B.B."/>
            <person name="Whiteway M."/>
            <person name="Chibana H."/>
            <person name="Nantel A."/>
            <person name="Magee P.T."/>
        </authorList>
    </citation>
    <scope>GENOME REANNOTATION</scope>
    <source>
        <strain>SC5314 / ATCC MYA-2876</strain>
    </source>
</reference>
<reference key="3">
    <citation type="journal article" date="2013" name="Genome Biol.">
        <title>Assembly of a phased diploid Candida albicans genome facilitates allele-specific measurements and provides a simple model for repeat and indel structure.</title>
        <authorList>
            <person name="Muzzey D."/>
            <person name="Schwartz K."/>
            <person name="Weissman J.S."/>
            <person name="Sherlock G."/>
        </authorList>
    </citation>
    <scope>NUCLEOTIDE SEQUENCE [LARGE SCALE GENOMIC DNA]</scope>
    <scope>GENOME REANNOTATION</scope>
    <source>
        <strain>SC5314 / ATCC MYA-2876</strain>
    </source>
</reference>
<reference key="4">
    <citation type="journal article" date="1997" name="FEBS Lett.">
        <title>Resistance to fluconazole and cross-resistance to amphotericin B in Candida albicans from AIDS patients caused by defective sterol delta5,6-desaturation.</title>
        <authorList>
            <person name="Kelly S.L."/>
            <person name="Lamb D.C."/>
            <person name="Kelly D.E."/>
            <person name="Manning N.J."/>
            <person name="Loeffler J."/>
            <person name="Hebart H."/>
            <person name="Schumacher U."/>
            <person name="Einsele H."/>
        </authorList>
    </citation>
    <scope>FUNCTION</scope>
    <scope>AZOLE-RESISTANCE</scope>
</reference>
<reference key="5">
    <citation type="journal article" date="1999" name="Gene">
        <title>Cloning, sequencing, expression and allelic sequence diversity of ERG3 (C-5 sterol desaturase gene) in Candida albicans.</title>
        <authorList>
            <person name="Miyazaki Y."/>
            <person name="Geber A."/>
            <person name="Miyazaki H."/>
            <person name="Falconer D."/>
            <person name="Parkinson T."/>
            <person name="Hitchcock C."/>
            <person name="Grimberg B."/>
            <person name="Nyswaner K."/>
            <person name="Bennett J.E."/>
        </authorList>
    </citation>
    <scope>FUNCTION</scope>
</reference>
<reference key="6">
    <citation type="journal article" date="2010" name="Antimicrob. Agents Chemother.">
        <title>Identification and characterization of four azole-resistant erg3 mutants of Candida albicans.</title>
        <authorList>
            <person name="Martel C.M."/>
            <person name="Parker J.E."/>
            <person name="Bader O."/>
            <person name="Weig M."/>
            <person name="Gross U."/>
            <person name="Warrilow A.G."/>
            <person name="Rolley N."/>
            <person name="Kelly D.E."/>
            <person name="Kelly S.L."/>
        </authorList>
    </citation>
    <scope>FUNCTION</scope>
    <scope>VARIANTS GLU-97; GLY-147; PRO-193; ALA-237; ASN-243; ALA-330; VAL-351 AND THR-353</scope>
    <scope>AZOLE-RESISTANCE</scope>
</reference>
<reference key="7">
    <citation type="journal article" date="2012" name="Cell">
        <title>A recently evolved transcriptional network controls biofilm development in Candida albicans.</title>
        <authorList>
            <person name="Nobile C.J."/>
            <person name="Fox E.P."/>
            <person name="Nett J.E."/>
            <person name="Sorrells T.R."/>
            <person name="Mitrovich Q.M."/>
            <person name="Hernday A.D."/>
            <person name="Tuch B.B."/>
            <person name="Andes D.R."/>
            <person name="Johnson A.D."/>
        </authorList>
    </citation>
    <scope>INDUCTION</scope>
</reference>
<name>ERG3_CANAL</name>
<keyword id="KW-0256">Endoplasmic reticulum</keyword>
<keyword id="KW-0408">Iron</keyword>
<keyword id="KW-0444">Lipid biosynthesis</keyword>
<keyword id="KW-0443">Lipid metabolism</keyword>
<keyword id="KW-0472">Membrane</keyword>
<keyword id="KW-0560">Oxidoreductase</keyword>
<keyword id="KW-1185">Reference proteome</keyword>
<keyword id="KW-0752">Steroid biosynthesis</keyword>
<keyword id="KW-0753">Steroid metabolism</keyword>
<keyword id="KW-0756">Sterol biosynthesis</keyword>
<keyword id="KW-1207">Sterol metabolism</keyword>
<keyword id="KW-0812">Transmembrane</keyword>
<keyword id="KW-1133">Transmembrane helix</keyword>
<protein>
    <recommendedName>
        <fullName evidence="8">Delta(7)-sterol 5(6)-desaturase ERG3</fullName>
        <ecNumber evidence="9">1.14.19.20</ecNumber>
    </recommendedName>
    <alternativeName>
        <fullName evidence="7">C-5 sterol desaturase ERG3</fullName>
    </alternativeName>
    <alternativeName>
        <fullName evidence="8">Ergosterol Delta(5,6) desaturase erg3</fullName>
    </alternativeName>
    <alternativeName>
        <fullName evidence="7">Ergosterol biosynthesis protein 3</fullName>
    </alternativeName>
    <alternativeName>
        <fullName evidence="7">Sterol-C5-desaturase ERG3</fullName>
    </alternativeName>
</protein>